<organism>
    <name type="scientific">Olivierus martensii</name>
    <name type="common">Manchurian scorpion</name>
    <name type="synonym">Mesobuthus martensii</name>
    <dbReference type="NCBI Taxonomy" id="34649"/>
    <lineage>
        <taxon>Eukaryota</taxon>
        <taxon>Metazoa</taxon>
        <taxon>Ecdysozoa</taxon>
        <taxon>Arthropoda</taxon>
        <taxon>Chelicerata</taxon>
        <taxon>Arachnida</taxon>
        <taxon>Scorpiones</taxon>
        <taxon>Buthida</taxon>
        <taxon>Buthoidea</taxon>
        <taxon>Buthidae</taxon>
        <taxon>Olivierus</taxon>
    </lineage>
</organism>
<reference key="1">
    <citation type="journal article" date="2000" name="Biochem. J.">
        <title>Genomic organization of three novel toxins from the scorpion Buthus martensi Karsch that are active on potassium channels.</title>
        <authorList>
            <person name="Dai L."/>
            <person name="Wu J.-J."/>
            <person name="Gu Y.-H."/>
            <person name="Lan Z.-D."/>
            <person name="Ling M.-H."/>
            <person name="Chi C.-W."/>
        </authorList>
    </citation>
    <scope>NUCLEOTIDE SEQUENCE [GENOMIC DNA]</scope>
</reference>
<reference key="2">
    <citation type="journal article" date="2001" name="Toxicon">
        <title>Molecular cloning and genomic organization of a K(+) channel toxin from the Chinese scorpion Buthus martensii Karsch.</title>
        <authorList>
            <person name="Zeng X.-C."/>
            <person name="Zhu Z.-H."/>
            <person name="Li W.-X."/>
            <person name="Zhu S.-Y."/>
            <person name="Peng F."/>
            <person name="Mao X."/>
            <person name="Liu H."/>
        </authorList>
    </citation>
    <scope>NUCLEOTIDE SEQUENCE [GENOMIC DNA / MRNA]</scope>
</reference>
<reference key="3">
    <citation type="journal article" date="1997" name="Biochemistry">
        <title>Purification, characterization, and synthesis of three novel toxins from the Chinese scorpion Buthus martensi, which act on K+ channels.</title>
        <authorList>
            <person name="Romi-Lebrun R."/>
            <person name="Lebrun B."/>
            <person name="Martin-Eauclaire M.-F."/>
            <person name="Ishiguro M."/>
            <person name="Escoubas P."/>
            <person name="Wu F.Q."/>
            <person name="Hisada M."/>
            <person name="Pongs O."/>
            <person name="Nakajima T."/>
        </authorList>
    </citation>
    <scope>PROTEIN SEQUENCE OF 22-58</scope>
    <scope>SYNTHESIS OF 22-58</scope>
    <scope>FUNCTION</scope>
    <scope>SUBCELLULAR LOCATION</scope>
    <scope>PYROGLUTAMATE FORMATION AT GLN-22</scope>
    <scope>ACTIVITY PROFILE</scope>
    <source>
        <tissue>Venom</tissue>
    </source>
</reference>
<reference key="4">
    <citation type="journal article" date="2008" name="Biochem. Pharmacol.">
        <title>A common 'hot spot' confers hERG blockade activity to alpha-scorpion toxins affecting K+ channels.</title>
        <authorList>
            <person name="Abdel-Mottaleb Y."/>
            <person name="Corzo G."/>
            <person name="Martin-Eauclaire M.F."/>
            <person name="Satake H."/>
            <person name="Ceard B."/>
            <person name="Peigneur S."/>
            <person name="Nambaru P."/>
            <person name="Bougis P.E."/>
            <person name="Possani L.D."/>
            <person name="Tytgat J."/>
        </authorList>
    </citation>
    <scope>FUNCTION</scope>
    <scope>ACTIVITY PROFILE</scope>
</reference>
<reference key="5">
    <citation type="journal article" date="1998" name="Biochemistry">
        <title>Solution structure of two new toxins from the venom of the Chinese scorpion Buthus martensi Karsch blockers of potassium channels.</title>
        <authorList>
            <person name="Blanc E."/>
            <person name="Romi-Lebrun R."/>
            <person name="Bornet O."/>
            <person name="Nakajima T."/>
            <person name="Darbon H."/>
        </authorList>
    </citation>
    <scope>STRUCTURE BY NMR OF 23-58</scope>
    <scope>DISULFIDE BONDS</scope>
    <scope>SYNTHESIS OF 23-58</scope>
</reference>
<sequence length="58" mass="6507">MKISFLLLLAIVICSIGWTEAQFTNVSCSASSQCWPVCKKLFGTYRGKCMNSKCRCYS</sequence>
<accession>Q9NII5</accession>
<accession>P58489</accession>
<name>KAX16_OLIMR</name>
<evidence type="ECO:0000250" key="1"/>
<evidence type="ECO:0000269" key="2">
    <source>
    </source>
</evidence>
<evidence type="ECO:0000269" key="3">
    <source>
    </source>
</evidence>
<evidence type="ECO:0000269" key="4">
    <source>
    </source>
</evidence>
<evidence type="ECO:0000303" key="5">
    <source>
    </source>
</evidence>
<evidence type="ECO:0000305" key="6"/>
<evidence type="ECO:0000312" key="7">
    <source>
        <dbReference type="PDB" id="2BMT"/>
    </source>
</evidence>
<evidence type="ECO:0007829" key="8">
    <source>
        <dbReference type="PDB" id="2BMT"/>
    </source>
</evidence>
<feature type="signal peptide" evidence="3">
    <location>
        <begin position="1"/>
        <end position="21"/>
    </location>
</feature>
<feature type="chain" id="PRO_0000035318" description="Potassium channel toxin alpha-KTx 1.6" evidence="3">
    <location>
        <begin position="22"/>
        <end position="58"/>
    </location>
</feature>
<feature type="site" description="Basic residue of the functional dyad" evidence="1">
    <location>
        <position position="48"/>
    </location>
</feature>
<feature type="site" description="Aromatic residue of the functional dyad" evidence="1">
    <location>
        <position position="57"/>
    </location>
</feature>
<feature type="modified residue" description="Pyrrolidone carboxylic acid" evidence="3">
    <location>
        <position position="22"/>
    </location>
</feature>
<feature type="disulfide bond" evidence="4 7">
    <location>
        <begin position="28"/>
        <end position="49"/>
    </location>
</feature>
<feature type="disulfide bond" evidence="4 7">
    <location>
        <begin position="34"/>
        <end position="54"/>
    </location>
</feature>
<feature type="disulfide bond" evidence="4 7">
    <location>
        <begin position="38"/>
        <end position="56"/>
    </location>
</feature>
<feature type="strand" evidence="8">
    <location>
        <begin position="23"/>
        <end position="27"/>
    </location>
</feature>
<feature type="helix" evidence="8">
    <location>
        <begin position="32"/>
        <end position="34"/>
    </location>
</feature>
<feature type="helix" evidence="8">
    <location>
        <begin position="35"/>
        <end position="41"/>
    </location>
</feature>
<feature type="strand" evidence="8">
    <location>
        <begin position="47"/>
        <end position="50"/>
    </location>
</feature>
<feature type="strand" evidence="8">
    <location>
        <begin position="53"/>
        <end position="56"/>
    </location>
</feature>
<proteinExistence type="evidence at protein level"/>
<keyword id="KW-0002">3D-structure</keyword>
<keyword id="KW-1221">Calcium-activated potassium channel impairing toxin</keyword>
<keyword id="KW-0903">Direct protein sequencing</keyword>
<keyword id="KW-1015">Disulfide bond</keyword>
<keyword id="KW-0872">Ion channel impairing toxin</keyword>
<keyword id="KW-0528">Neurotoxin</keyword>
<keyword id="KW-0632">Potassium channel impairing toxin</keyword>
<keyword id="KW-0873">Pyrrolidone carboxylic acid</keyword>
<keyword id="KW-0964">Secreted</keyword>
<keyword id="KW-0732">Signal</keyword>
<keyword id="KW-0800">Toxin</keyword>
<keyword id="KW-1220">Voltage-gated potassium channel impairing toxin</keyword>
<protein>
    <recommendedName>
        <fullName>Potassium channel toxin alpha-KTx 1.6</fullName>
    </recommendedName>
    <alternativeName>
        <fullName evidence="5">BmTX2</fullName>
    </alternativeName>
    <alternativeName>
        <fullName>Neurotoxin TX2</fullName>
    </alternativeName>
</protein>
<comment type="function">
    <text evidence="2 3">Potent blocker of both large-conductance calcium-activated potassium channels (KCa1.1/KCNMA1) and voltage-gated potassium channels (Kv1.3/KCNA3 and ERG1/Kv11.1/KCNH2).</text>
</comment>
<comment type="subcellular location">
    <subcellularLocation>
        <location evidence="3">Secreted</location>
    </subcellularLocation>
</comment>
<comment type="tissue specificity">
    <text evidence="6">Expressed by the venom gland.</text>
</comment>
<comment type="domain">
    <text>Has the structural arrangement of an alpha-helix connected to a beta-sheet by disulfide bonds (CSalpha/beta).</text>
</comment>
<comment type="similarity">
    <text evidence="6">Belongs to the short scorpion toxin superfamily. Potassium channel inhibitor family. Alpha-KTx 01 subfamily.</text>
</comment>
<dbReference type="EMBL" id="AF208300">
    <property type="protein sequence ID" value="AAF63972.1"/>
    <property type="molecule type" value="Genomic_DNA"/>
</dbReference>
<dbReference type="EMBL" id="AF151537">
    <property type="protein sequence ID" value="AAQ13576.1"/>
    <property type="molecule type" value="mRNA"/>
</dbReference>
<dbReference type="EMBL" id="AF247058">
    <property type="protein sequence ID" value="AAK73518.1"/>
    <property type="molecule type" value="Genomic_DNA"/>
</dbReference>
<dbReference type="PDB" id="2BMT">
    <property type="method" value="NMR"/>
    <property type="chains" value="A=23-58"/>
</dbReference>
<dbReference type="PDBsum" id="2BMT"/>
<dbReference type="BMRB" id="Q9NII5"/>
<dbReference type="SMR" id="Q9NII5"/>
<dbReference type="EvolutionaryTrace" id="Q9NII5"/>
<dbReference type="GO" id="GO:0005576">
    <property type="term" value="C:extracellular region"/>
    <property type="evidence" value="ECO:0007669"/>
    <property type="project" value="UniProtKB-SubCell"/>
</dbReference>
<dbReference type="GO" id="GO:0008200">
    <property type="term" value="F:ion channel inhibitor activity"/>
    <property type="evidence" value="ECO:0007669"/>
    <property type="project" value="InterPro"/>
</dbReference>
<dbReference type="GO" id="GO:0015459">
    <property type="term" value="F:potassium channel regulator activity"/>
    <property type="evidence" value="ECO:0007669"/>
    <property type="project" value="UniProtKB-KW"/>
</dbReference>
<dbReference type="GO" id="GO:0090729">
    <property type="term" value="F:toxin activity"/>
    <property type="evidence" value="ECO:0007669"/>
    <property type="project" value="UniProtKB-KW"/>
</dbReference>
<dbReference type="Gene3D" id="3.30.30.10">
    <property type="entry name" value="Knottin, scorpion toxin-like"/>
    <property type="match status" value="1"/>
</dbReference>
<dbReference type="InterPro" id="IPR036574">
    <property type="entry name" value="Scorpion_toxin-like_sf"/>
</dbReference>
<dbReference type="InterPro" id="IPR001947">
    <property type="entry name" value="Scorpion_toxinS_K_inh"/>
</dbReference>
<dbReference type="Pfam" id="PF00451">
    <property type="entry name" value="Toxin_2"/>
    <property type="match status" value="1"/>
</dbReference>
<dbReference type="PRINTS" id="PR00286">
    <property type="entry name" value="CHARYBDTOXIN"/>
</dbReference>
<dbReference type="SUPFAM" id="SSF57095">
    <property type="entry name" value="Scorpion toxin-like"/>
    <property type="match status" value="1"/>
</dbReference>
<dbReference type="PROSITE" id="PS01138">
    <property type="entry name" value="SCORP_SHORT_TOXIN"/>
    <property type="match status" value="1"/>
</dbReference>